<sequence>MTVLTDKIAVVTGAGSGIGEAIATLLHEEGAKVVLAGRNKDKLQNVANQLAQDSVKVVPTDVTKKEEVDELIKMAQQTFGGLDIVINSAGQMLSSKITDYQVDEWDSMIDVNIKGTLYTAKAALPTMLEQSSGHLINIASISGFEVTKSSTIYSATKAAVHTITQGLEKELAKTGVKVTSISPGMVDTAITATYNPTDRKKLEPQDIAEAVLYALTQPKHVNVNEITVRPV</sequence>
<feature type="chain" id="PRO_0000300471" description="Uncharacterized oxidoreductase SAR2567">
    <location>
        <begin position="1"/>
        <end position="231"/>
    </location>
</feature>
<feature type="active site" description="Proton acceptor" evidence="1">
    <location>
        <position position="153"/>
    </location>
</feature>
<feature type="binding site" evidence="1">
    <location>
        <begin position="10"/>
        <end position="34"/>
    </location>
    <ligand>
        <name>NADP(+)</name>
        <dbReference type="ChEBI" id="CHEBI:58349"/>
    </ligand>
</feature>
<feature type="binding site" evidence="1">
    <location>
        <position position="140"/>
    </location>
    <ligand>
        <name>substrate</name>
    </ligand>
</feature>
<name>Y2567_STAAR</name>
<organism>
    <name type="scientific">Staphylococcus aureus (strain MRSA252)</name>
    <dbReference type="NCBI Taxonomy" id="282458"/>
    <lineage>
        <taxon>Bacteria</taxon>
        <taxon>Bacillati</taxon>
        <taxon>Bacillota</taxon>
        <taxon>Bacilli</taxon>
        <taxon>Bacillales</taxon>
        <taxon>Staphylococcaceae</taxon>
        <taxon>Staphylococcus</taxon>
    </lineage>
</organism>
<keyword id="KW-0560">Oxidoreductase</keyword>
<protein>
    <recommendedName>
        <fullName>Uncharacterized oxidoreductase SAR2567</fullName>
        <ecNumber>1.-.-.-</ecNumber>
    </recommendedName>
</protein>
<dbReference type="EC" id="1.-.-.-"/>
<dbReference type="EMBL" id="BX571856">
    <property type="protein sequence ID" value="CAG41548.1"/>
    <property type="molecule type" value="Genomic_DNA"/>
</dbReference>
<dbReference type="RefSeq" id="WP_000217452.1">
    <property type="nucleotide sequence ID" value="NC_002952.2"/>
</dbReference>
<dbReference type="SMR" id="Q6GDV6"/>
<dbReference type="KEGG" id="sar:SAR2567"/>
<dbReference type="HOGENOM" id="CLU_010194_2_10_9"/>
<dbReference type="Proteomes" id="UP000000596">
    <property type="component" value="Chromosome"/>
</dbReference>
<dbReference type="GO" id="GO:0016491">
    <property type="term" value="F:oxidoreductase activity"/>
    <property type="evidence" value="ECO:0007669"/>
    <property type="project" value="UniProtKB-KW"/>
</dbReference>
<dbReference type="CDD" id="cd05233">
    <property type="entry name" value="SDR_c"/>
    <property type="match status" value="1"/>
</dbReference>
<dbReference type="FunFam" id="3.40.50.720:FF:000047">
    <property type="entry name" value="NADP-dependent L-serine/L-allo-threonine dehydrogenase"/>
    <property type="match status" value="1"/>
</dbReference>
<dbReference type="Gene3D" id="3.40.50.720">
    <property type="entry name" value="NAD(P)-binding Rossmann-like Domain"/>
    <property type="match status" value="1"/>
</dbReference>
<dbReference type="InterPro" id="IPR036291">
    <property type="entry name" value="NAD(P)-bd_dom_sf"/>
</dbReference>
<dbReference type="InterPro" id="IPR002347">
    <property type="entry name" value="SDR_fam"/>
</dbReference>
<dbReference type="PANTHER" id="PTHR43115">
    <property type="entry name" value="DEHYDROGENASE/REDUCTASE SDR FAMILY MEMBER 11"/>
    <property type="match status" value="1"/>
</dbReference>
<dbReference type="PANTHER" id="PTHR43115:SF4">
    <property type="entry name" value="DEHYDROGENASE_REDUCTASE SDR FAMILY MEMBER 11"/>
    <property type="match status" value="1"/>
</dbReference>
<dbReference type="Pfam" id="PF00106">
    <property type="entry name" value="adh_short"/>
    <property type="match status" value="1"/>
</dbReference>
<dbReference type="PRINTS" id="PR00081">
    <property type="entry name" value="GDHRDH"/>
</dbReference>
<dbReference type="PRINTS" id="PR00080">
    <property type="entry name" value="SDRFAMILY"/>
</dbReference>
<dbReference type="SUPFAM" id="SSF51735">
    <property type="entry name" value="NAD(P)-binding Rossmann-fold domains"/>
    <property type="match status" value="1"/>
</dbReference>
<comment type="similarity">
    <text evidence="2">Belongs to the short-chain dehydrogenases/reductases (SDR) family.</text>
</comment>
<accession>Q6GDV6</accession>
<evidence type="ECO:0000250" key="1"/>
<evidence type="ECO:0000305" key="2"/>
<proteinExistence type="inferred from homology"/>
<reference key="1">
    <citation type="journal article" date="2004" name="Proc. Natl. Acad. Sci. U.S.A.">
        <title>Complete genomes of two clinical Staphylococcus aureus strains: evidence for the rapid evolution of virulence and drug resistance.</title>
        <authorList>
            <person name="Holden M.T.G."/>
            <person name="Feil E.J."/>
            <person name="Lindsay J.A."/>
            <person name="Peacock S.J."/>
            <person name="Day N.P.J."/>
            <person name="Enright M.C."/>
            <person name="Foster T.J."/>
            <person name="Moore C.E."/>
            <person name="Hurst L."/>
            <person name="Atkin R."/>
            <person name="Barron A."/>
            <person name="Bason N."/>
            <person name="Bentley S.D."/>
            <person name="Chillingworth C."/>
            <person name="Chillingworth T."/>
            <person name="Churcher C."/>
            <person name="Clark L."/>
            <person name="Corton C."/>
            <person name="Cronin A."/>
            <person name="Doggett J."/>
            <person name="Dowd L."/>
            <person name="Feltwell T."/>
            <person name="Hance Z."/>
            <person name="Harris B."/>
            <person name="Hauser H."/>
            <person name="Holroyd S."/>
            <person name="Jagels K."/>
            <person name="James K.D."/>
            <person name="Lennard N."/>
            <person name="Line A."/>
            <person name="Mayes R."/>
            <person name="Moule S."/>
            <person name="Mungall K."/>
            <person name="Ormond D."/>
            <person name="Quail M.A."/>
            <person name="Rabbinowitsch E."/>
            <person name="Rutherford K.M."/>
            <person name="Sanders M."/>
            <person name="Sharp S."/>
            <person name="Simmonds M."/>
            <person name="Stevens K."/>
            <person name="Whitehead S."/>
            <person name="Barrell B.G."/>
            <person name="Spratt B.G."/>
            <person name="Parkhill J."/>
        </authorList>
    </citation>
    <scope>NUCLEOTIDE SEQUENCE [LARGE SCALE GENOMIC DNA]</scope>
    <source>
        <strain>MRSA252</strain>
    </source>
</reference>
<gene>
    <name type="ordered locus">SAR2567</name>
</gene>